<keyword id="KW-0143">Chaperone</keyword>
<keyword id="KW-0963">Cytoplasm</keyword>
<keyword id="KW-0533">Nickel</keyword>
<keyword id="KW-0996">Nickel insertion</keyword>
<keyword id="KW-1185">Reference proteome</keyword>
<evidence type="ECO:0000255" key="1">
    <source>
        <dbReference type="HAMAP-Rule" id="MF_00822"/>
    </source>
</evidence>
<evidence type="ECO:0000256" key="2">
    <source>
        <dbReference type="SAM" id="MobiDB-lite"/>
    </source>
</evidence>
<protein>
    <recommendedName>
        <fullName evidence="1">Urease accessory protein UreE</fullName>
    </recommendedName>
</protein>
<feature type="chain" id="PRO_0000223423" description="Urease accessory protein UreE">
    <location>
        <begin position="1"/>
        <end position="167"/>
    </location>
</feature>
<feature type="region of interest" description="Disordered" evidence="2">
    <location>
        <begin position="137"/>
        <end position="158"/>
    </location>
</feature>
<sequence length="167" mass="18227">MIVLSRRISEPGTRVVSGTVTLDVDSRIKSRLRVTLDDGREAGLMLERGHLLRGGELLADAEGTQLIRVLAAPEAVSTVRCADPHLLARAAYHLGNRHVPLQIEPGLLRFQHDHVLDDMLRGLGLTVEAEQAPFEPEAGAYQSAPHGHSHSHAHGHDHPFVRLPAHS</sequence>
<organism>
    <name type="scientific">Pseudomonas putida (strain ATCC 47054 / DSM 6125 / CFBP 8728 / NCIMB 11950 / KT2440)</name>
    <dbReference type="NCBI Taxonomy" id="160488"/>
    <lineage>
        <taxon>Bacteria</taxon>
        <taxon>Pseudomonadati</taxon>
        <taxon>Pseudomonadota</taxon>
        <taxon>Gammaproteobacteria</taxon>
        <taxon>Pseudomonadales</taxon>
        <taxon>Pseudomonadaceae</taxon>
        <taxon>Pseudomonas</taxon>
    </lineage>
</organism>
<name>UREE_PSEPK</name>
<proteinExistence type="inferred from homology"/>
<dbReference type="EMBL" id="AE015451">
    <property type="protein sequence ID" value="AAN68454.1"/>
    <property type="molecule type" value="Genomic_DNA"/>
</dbReference>
<dbReference type="RefSeq" id="NP_744990.1">
    <property type="nucleotide sequence ID" value="NC_002947.4"/>
</dbReference>
<dbReference type="RefSeq" id="WP_003253926.1">
    <property type="nucleotide sequence ID" value="NZ_CP169744.1"/>
</dbReference>
<dbReference type="SMR" id="Q88J03"/>
<dbReference type="STRING" id="160488.PP_2846"/>
<dbReference type="PaxDb" id="160488-PP_2846"/>
<dbReference type="GeneID" id="83680569"/>
<dbReference type="KEGG" id="ppu:PP_2846"/>
<dbReference type="PATRIC" id="fig|160488.4.peg.3019"/>
<dbReference type="eggNOG" id="COG2371">
    <property type="taxonomic scope" value="Bacteria"/>
</dbReference>
<dbReference type="HOGENOM" id="CLU_093757_2_0_6"/>
<dbReference type="OrthoDB" id="5421304at2"/>
<dbReference type="PhylomeDB" id="Q88J03"/>
<dbReference type="BioCyc" id="PPUT160488:G1G01-3026-MONOMER"/>
<dbReference type="Proteomes" id="UP000000556">
    <property type="component" value="Chromosome"/>
</dbReference>
<dbReference type="GO" id="GO:0005737">
    <property type="term" value="C:cytoplasm"/>
    <property type="evidence" value="ECO:0007669"/>
    <property type="project" value="UniProtKB-SubCell"/>
</dbReference>
<dbReference type="GO" id="GO:0016151">
    <property type="term" value="F:nickel cation binding"/>
    <property type="evidence" value="ECO:0007669"/>
    <property type="project" value="UniProtKB-UniRule"/>
</dbReference>
<dbReference type="GO" id="GO:0051082">
    <property type="term" value="F:unfolded protein binding"/>
    <property type="evidence" value="ECO:0007669"/>
    <property type="project" value="UniProtKB-UniRule"/>
</dbReference>
<dbReference type="GO" id="GO:0006457">
    <property type="term" value="P:protein folding"/>
    <property type="evidence" value="ECO:0007669"/>
    <property type="project" value="InterPro"/>
</dbReference>
<dbReference type="GO" id="GO:0065003">
    <property type="term" value="P:protein-containing complex assembly"/>
    <property type="evidence" value="ECO:0007669"/>
    <property type="project" value="InterPro"/>
</dbReference>
<dbReference type="GO" id="GO:0019627">
    <property type="term" value="P:urea metabolic process"/>
    <property type="evidence" value="ECO:0007669"/>
    <property type="project" value="InterPro"/>
</dbReference>
<dbReference type="CDD" id="cd00571">
    <property type="entry name" value="UreE"/>
    <property type="match status" value="1"/>
</dbReference>
<dbReference type="Gene3D" id="2.60.260.20">
    <property type="entry name" value="Urease metallochaperone UreE, N-terminal domain"/>
    <property type="match status" value="1"/>
</dbReference>
<dbReference type="Gene3D" id="3.30.70.790">
    <property type="entry name" value="UreE, C-terminal domain"/>
    <property type="match status" value="1"/>
</dbReference>
<dbReference type="HAMAP" id="MF_00822">
    <property type="entry name" value="UreE"/>
    <property type="match status" value="1"/>
</dbReference>
<dbReference type="InterPro" id="IPR012406">
    <property type="entry name" value="UreE"/>
</dbReference>
<dbReference type="InterPro" id="IPR007864">
    <property type="entry name" value="UreE_C_dom"/>
</dbReference>
<dbReference type="InterPro" id="IPR004029">
    <property type="entry name" value="UreE_N"/>
</dbReference>
<dbReference type="InterPro" id="IPR036118">
    <property type="entry name" value="UreE_N_sf"/>
</dbReference>
<dbReference type="NCBIfam" id="NF009751">
    <property type="entry name" value="PRK13261.1-1"/>
    <property type="match status" value="1"/>
</dbReference>
<dbReference type="Pfam" id="PF05194">
    <property type="entry name" value="UreE_C"/>
    <property type="match status" value="1"/>
</dbReference>
<dbReference type="Pfam" id="PF02814">
    <property type="entry name" value="UreE_N"/>
    <property type="match status" value="1"/>
</dbReference>
<dbReference type="PIRSF" id="PIRSF036402">
    <property type="entry name" value="Ureas_acces_UreE"/>
    <property type="match status" value="1"/>
</dbReference>
<dbReference type="SMART" id="SM00988">
    <property type="entry name" value="UreE_N"/>
    <property type="match status" value="1"/>
</dbReference>
<dbReference type="SUPFAM" id="SSF69737">
    <property type="entry name" value="Urease metallochaperone UreE, C-terminal domain"/>
    <property type="match status" value="1"/>
</dbReference>
<dbReference type="SUPFAM" id="SSF69287">
    <property type="entry name" value="Urease metallochaperone UreE, N-terminal domain"/>
    <property type="match status" value="1"/>
</dbReference>
<reference key="1">
    <citation type="journal article" date="2002" name="Environ. Microbiol.">
        <title>Complete genome sequence and comparative analysis of the metabolically versatile Pseudomonas putida KT2440.</title>
        <authorList>
            <person name="Nelson K.E."/>
            <person name="Weinel C."/>
            <person name="Paulsen I.T."/>
            <person name="Dodson R.J."/>
            <person name="Hilbert H."/>
            <person name="Martins dos Santos V.A.P."/>
            <person name="Fouts D.E."/>
            <person name="Gill S.R."/>
            <person name="Pop M."/>
            <person name="Holmes M."/>
            <person name="Brinkac L.M."/>
            <person name="Beanan M.J."/>
            <person name="DeBoy R.T."/>
            <person name="Daugherty S.C."/>
            <person name="Kolonay J.F."/>
            <person name="Madupu R."/>
            <person name="Nelson W.C."/>
            <person name="White O."/>
            <person name="Peterson J.D."/>
            <person name="Khouri H.M."/>
            <person name="Hance I."/>
            <person name="Chris Lee P."/>
            <person name="Holtzapple E.K."/>
            <person name="Scanlan D."/>
            <person name="Tran K."/>
            <person name="Moazzez A."/>
            <person name="Utterback T.R."/>
            <person name="Rizzo M."/>
            <person name="Lee K."/>
            <person name="Kosack D."/>
            <person name="Moestl D."/>
            <person name="Wedler H."/>
            <person name="Lauber J."/>
            <person name="Stjepandic D."/>
            <person name="Hoheisel J."/>
            <person name="Straetz M."/>
            <person name="Heim S."/>
            <person name="Kiewitz C."/>
            <person name="Eisen J.A."/>
            <person name="Timmis K.N."/>
            <person name="Duesterhoeft A."/>
            <person name="Tuemmler B."/>
            <person name="Fraser C.M."/>
        </authorList>
    </citation>
    <scope>NUCLEOTIDE SEQUENCE [LARGE SCALE GENOMIC DNA]</scope>
    <source>
        <strain>ATCC 47054 / DSM 6125 / CFBP 8728 / NCIMB 11950 / KT2440</strain>
    </source>
</reference>
<accession>Q88J03</accession>
<comment type="function">
    <text evidence="1">Involved in urease metallocenter assembly. Binds nickel. Probably functions as a nickel donor during metallocenter assembly.</text>
</comment>
<comment type="subcellular location">
    <subcellularLocation>
        <location evidence="1">Cytoplasm</location>
    </subcellularLocation>
</comment>
<comment type="similarity">
    <text evidence="1">Belongs to the UreE family.</text>
</comment>
<gene>
    <name evidence="1" type="primary">ureE</name>
    <name type="ordered locus">PP_2846</name>
</gene>